<protein>
    <recommendedName>
        <fullName evidence="1">N-acetylmuramic acid 6-phosphate etherase</fullName>
        <shortName evidence="1">MurNAc-6-P etherase</shortName>
        <ecNumber evidence="1">4.2.1.126</ecNumber>
    </recommendedName>
    <alternativeName>
        <fullName evidence="1">N-acetylmuramic acid 6-phosphate hydrolase</fullName>
    </alternativeName>
    <alternativeName>
        <fullName evidence="1">N-acetylmuramic acid 6-phosphate lyase</fullName>
    </alternativeName>
</protein>
<sequence length="300" mass="31586">MELNRLVTEGRLQESLEIDQVSTLEMVRIINEQDKQVALAVEKELPHIARAVDLIAERLRAGGRLFYVGAGTSGRLGILDASEIPPTYGAPPDLVQGVIAGGLEAVFRTREGAEDSREQGAADIAARVRPGDVVVGIAASGRTPYTVAALEEARRLGCATVAVTNNPDSALAAAADVAIAPVVGPEVIMGSTRMKAGTAQKMVLNMLSTGAMIRLGKVYSNLMVDMQASNEKLRHRAVRMVVQATGRDEDAAARALEEAGGSVKQAIVALLAGVDARTAREALDRAGGYVREAIRLAQGK</sequence>
<comment type="function">
    <text evidence="1">Specifically catalyzes the cleavage of the D-lactyl ether substituent of MurNAc 6-phosphate, producing GlcNAc 6-phosphate and D-lactate.</text>
</comment>
<comment type="catalytic activity">
    <reaction evidence="1">
        <text>N-acetyl-D-muramate 6-phosphate + H2O = N-acetyl-D-glucosamine 6-phosphate + (R)-lactate</text>
        <dbReference type="Rhea" id="RHEA:26410"/>
        <dbReference type="ChEBI" id="CHEBI:15377"/>
        <dbReference type="ChEBI" id="CHEBI:16004"/>
        <dbReference type="ChEBI" id="CHEBI:57513"/>
        <dbReference type="ChEBI" id="CHEBI:58722"/>
        <dbReference type="EC" id="4.2.1.126"/>
    </reaction>
</comment>
<comment type="pathway">
    <text evidence="1">Amino-sugar metabolism; N-acetylmuramate degradation.</text>
</comment>
<comment type="subunit">
    <text evidence="1">Homodimer.</text>
</comment>
<comment type="miscellaneous">
    <text evidence="1">A lyase-type mechanism (elimination/hydration) is suggested for the cleavage of the lactyl ether bond of MurNAc 6-phosphate, with the formation of an alpha,beta-unsaturated aldehyde intermediate with (E)-stereochemistry, followed by the syn addition of water to give product.</text>
</comment>
<comment type="similarity">
    <text evidence="1">Belongs to the GCKR-like family. MurNAc-6-P etherase subfamily.</text>
</comment>
<evidence type="ECO:0000255" key="1">
    <source>
        <dbReference type="HAMAP-Rule" id="MF_00068"/>
    </source>
</evidence>
<gene>
    <name evidence="1" type="primary">murQ</name>
    <name type="ordered locus">STH604</name>
</gene>
<name>MURQ_SYMTH</name>
<keyword id="KW-0119">Carbohydrate metabolism</keyword>
<keyword id="KW-0456">Lyase</keyword>
<keyword id="KW-1185">Reference proteome</keyword>
<proteinExistence type="inferred from homology"/>
<dbReference type="EC" id="4.2.1.126" evidence="1"/>
<dbReference type="EMBL" id="AP006840">
    <property type="protein sequence ID" value="BAD39589.1"/>
    <property type="molecule type" value="Genomic_DNA"/>
</dbReference>
<dbReference type="SMR" id="Q67RV4"/>
<dbReference type="STRING" id="292459.STH604"/>
<dbReference type="KEGG" id="sth:STH604"/>
<dbReference type="eggNOG" id="COG2103">
    <property type="taxonomic scope" value="Bacteria"/>
</dbReference>
<dbReference type="HOGENOM" id="CLU_049049_1_1_9"/>
<dbReference type="UniPathway" id="UPA00342"/>
<dbReference type="Proteomes" id="UP000000417">
    <property type="component" value="Chromosome"/>
</dbReference>
<dbReference type="GO" id="GO:0097367">
    <property type="term" value="F:carbohydrate derivative binding"/>
    <property type="evidence" value="ECO:0007669"/>
    <property type="project" value="InterPro"/>
</dbReference>
<dbReference type="GO" id="GO:0016835">
    <property type="term" value="F:carbon-oxygen lyase activity"/>
    <property type="evidence" value="ECO:0007669"/>
    <property type="project" value="UniProtKB-UniRule"/>
</dbReference>
<dbReference type="GO" id="GO:0016803">
    <property type="term" value="F:ether hydrolase activity"/>
    <property type="evidence" value="ECO:0007669"/>
    <property type="project" value="TreeGrafter"/>
</dbReference>
<dbReference type="GO" id="GO:0046348">
    <property type="term" value="P:amino sugar catabolic process"/>
    <property type="evidence" value="ECO:0007669"/>
    <property type="project" value="InterPro"/>
</dbReference>
<dbReference type="GO" id="GO:0097173">
    <property type="term" value="P:N-acetylmuramic acid catabolic process"/>
    <property type="evidence" value="ECO:0007669"/>
    <property type="project" value="UniProtKB-UniPathway"/>
</dbReference>
<dbReference type="GO" id="GO:0009254">
    <property type="term" value="P:peptidoglycan turnover"/>
    <property type="evidence" value="ECO:0007669"/>
    <property type="project" value="TreeGrafter"/>
</dbReference>
<dbReference type="CDD" id="cd05007">
    <property type="entry name" value="SIS_Etherase"/>
    <property type="match status" value="1"/>
</dbReference>
<dbReference type="FunFam" id="1.10.8.1080:FF:000001">
    <property type="entry name" value="N-acetylmuramic acid 6-phosphate etherase"/>
    <property type="match status" value="1"/>
</dbReference>
<dbReference type="FunFam" id="3.40.50.10490:FF:000014">
    <property type="entry name" value="N-acetylmuramic acid 6-phosphate etherase"/>
    <property type="match status" value="1"/>
</dbReference>
<dbReference type="Gene3D" id="1.10.8.1080">
    <property type="match status" value="1"/>
</dbReference>
<dbReference type="Gene3D" id="3.40.50.10490">
    <property type="entry name" value="Glucose-6-phosphate isomerase like protein, domain 1"/>
    <property type="match status" value="1"/>
</dbReference>
<dbReference type="HAMAP" id="MF_00068">
    <property type="entry name" value="MurQ"/>
    <property type="match status" value="1"/>
</dbReference>
<dbReference type="InterPro" id="IPR005488">
    <property type="entry name" value="Etherase_MurQ"/>
</dbReference>
<dbReference type="InterPro" id="IPR005486">
    <property type="entry name" value="Glucokinase_regulatory_CS"/>
</dbReference>
<dbReference type="InterPro" id="IPR040190">
    <property type="entry name" value="MURQ/GCKR"/>
</dbReference>
<dbReference type="InterPro" id="IPR001347">
    <property type="entry name" value="SIS_dom"/>
</dbReference>
<dbReference type="InterPro" id="IPR046348">
    <property type="entry name" value="SIS_dom_sf"/>
</dbReference>
<dbReference type="NCBIfam" id="TIGR00274">
    <property type="entry name" value="N-acetylmuramic acid 6-phosphate etherase"/>
    <property type="match status" value="1"/>
</dbReference>
<dbReference type="NCBIfam" id="NF003915">
    <property type="entry name" value="PRK05441.1"/>
    <property type="match status" value="1"/>
</dbReference>
<dbReference type="NCBIfam" id="NF009222">
    <property type="entry name" value="PRK12570.1"/>
    <property type="match status" value="1"/>
</dbReference>
<dbReference type="PANTHER" id="PTHR10088">
    <property type="entry name" value="GLUCOKINASE REGULATORY PROTEIN"/>
    <property type="match status" value="1"/>
</dbReference>
<dbReference type="PANTHER" id="PTHR10088:SF4">
    <property type="entry name" value="GLUCOKINASE REGULATORY PROTEIN"/>
    <property type="match status" value="1"/>
</dbReference>
<dbReference type="Pfam" id="PF22645">
    <property type="entry name" value="GKRP_SIS_N"/>
    <property type="match status" value="1"/>
</dbReference>
<dbReference type="SUPFAM" id="SSF53697">
    <property type="entry name" value="SIS domain"/>
    <property type="match status" value="1"/>
</dbReference>
<dbReference type="PROSITE" id="PS01272">
    <property type="entry name" value="GCKR"/>
    <property type="match status" value="1"/>
</dbReference>
<dbReference type="PROSITE" id="PS51464">
    <property type="entry name" value="SIS"/>
    <property type="match status" value="1"/>
</dbReference>
<organism>
    <name type="scientific">Symbiobacterium thermophilum (strain DSM 24528 / JCM 14929 / IAM 14863 / T)</name>
    <dbReference type="NCBI Taxonomy" id="292459"/>
    <lineage>
        <taxon>Bacteria</taxon>
        <taxon>Bacillati</taxon>
        <taxon>Bacillota</taxon>
        <taxon>Clostridia</taxon>
        <taxon>Eubacteriales</taxon>
        <taxon>Symbiobacteriaceae</taxon>
        <taxon>Symbiobacterium</taxon>
    </lineage>
</organism>
<accession>Q67RV4</accession>
<reference key="1">
    <citation type="journal article" date="2004" name="Nucleic Acids Res.">
        <title>Genome sequence of Symbiobacterium thermophilum, an uncultivable bacterium that depends on microbial commensalism.</title>
        <authorList>
            <person name="Ueda K."/>
            <person name="Yamashita A."/>
            <person name="Ishikawa J."/>
            <person name="Shimada M."/>
            <person name="Watsuji T."/>
            <person name="Morimura K."/>
            <person name="Ikeda H."/>
            <person name="Hattori M."/>
            <person name="Beppu T."/>
        </authorList>
    </citation>
    <scope>NUCLEOTIDE SEQUENCE [LARGE SCALE GENOMIC DNA]</scope>
    <source>
        <strain>DSM 24528 / JCM 14929 / IAM 14863 / T</strain>
    </source>
</reference>
<feature type="chain" id="PRO_0000249668" description="N-acetylmuramic acid 6-phosphate etherase">
    <location>
        <begin position="1"/>
        <end position="300"/>
    </location>
</feature>
<feature type="domain" description="SIS" evidence="1">
    <location>
        <begin position="55"/>
        <end position="217"/>
    </location>
</feature>
<feature type="active site" description="Proton donor" evidence="1">
    <location>
        <position position="83"/>
    </location>
</feature>
<feature type="active site" evidence="1">
    <location>
        <position position="114"/>
    </location>
</feature>